<feature type="chain" id="PRO_0000219845" description="Light-independent protochlorophyllide reductase subunit B">
    <location>
        <begin position="1" status="less than"/>
        <end position="103" status="greater than"/>
    </location>
</feature>
<feature type="non-terminal residue">
    <location>
        <position position="1"/>
    </location>
</feature>
<feature type="non-terminal residue">
    <location>
        <position position="103"/>
    </location>
</feature>
<evidence type="ECO:0000250" key="1"/>
<evidence type="ECO:0000305" key="2"/>
<name>CHLB_SPHCO</name>
<keyword id="KW-0004">4Fe-4S</keyword>
<keyword id="KW-0067">ATP-binding</keyword>
<keyword id="KW-0149">Chlorophyll biosynthesis</keyword>
<keyword id="KW-0150">Chloroplast</keyword>
<keyword id="KW-0408">Iron</keyword>
<keyword id="KW-0411">Iron-sulfur</keyword>
<keyword id="KW-0479">Metal-binding</keyword>
<keyword id="KW-0547">Nucleotide-binding</keyword>
<keyword id="KW-0560">Oxidoreductase</keyword>
<keyword id="KW-0602">Photosynthesis</keyword>
<keyword id="KW-0934">Plastid</keyword>
<accession>Q33076</accession>
<reference key="1">
    <citation type="journal article" date="1996" name="Mol. Phylogenet. Evol.">
        <title>Phylogenetic inferences from chloroplast chlB gene sequences of Nephrolepis exaltata (Filicopsida), Ephedra altissima (Gnetopsida), and diverse land plants.</title>
        <authorList>
            <person name="Boivin R."/>
            <person name="Richard M."/>
            <person name="Beauseigle D."/>
            <person name="Bousquet J."/>
            <person name="Bellemare G."/>
        </authorList>
    </citation>
    <scope>NUCLEOTIDE SEQUENCE [GENOMIC DNA]</scope>
</reference>
<dbReference type="EC" id="1.3.7.7"/>
<dbReference type="EMBL" id="U21314">
    <property type="protein sequence ID" value="AAC49432.1"/>
    <property type="molecule type" value="Genomic_DNA"/>
</dbReference>
<dbReference type="SMR" id="Q33076"/>
<dbReference type="UniPathway" id="UPA00670"/>
<dbReference type="GO" id="GO:0009507">
    <property type="term" value="C:chloroplast"/>
    <property type="evidence" value="ECO:0007669"/>
    <property type="project" value="UniProtKB-SubCell"/>
</dbReference>
<dbReference type="GO" id="GO:0051539">
    <property type="term" value="F:4 iron, 4 sulfur cluster binding"/>
    <property type="evidence" value="ECO:0007669"/>
    <property type="project" value="UniProtKB-KW"/>
</dbReference>
<dbReference type="GO" id="GO:0005524">
    <property type="term" value="F:ATP binding"/>
    <property type="evidence" value="ECO:0007669"/>
    <property type="project" value="UniProtKB-KW"/>
</dbReference>
<dbReference type="GO" id="GO:0046872">
    <property type="term" value="F:metal ion binding"/>
    <property type="evidence" value="ECO:0007669"/>
    <property type="project" value="UniProtKB-KW"/>
</dbReference>
<dbReference type="GO" id="GO:0016491">
    <property type="term" value="F:oxidoreductase activity"/>
    <property type="evidence" value="ECO:0007669"/>
    <property type="project" value="UniProtKB-KW"/>
</dbReference>
<dbReference type="GO" id="GO:0036068">
    <property type="term" value="P:light-independent chlorophyll biosynthetic process"/>
    <property type="evidence" value="ECO:0007669"/>
    <property type="project" value="UniProtKB-UniPathway"/>
</dbReference>
<dbReference type="GO" id="GO:0015979">
    <property type="term" value="P:photosynthesis"/>
    <property type="evidence" value="ECO:0007669"/>
    <property type="project" value="UniProtKB-KW"/>
</dbReference>
<dbReference type="Gene3D" id="3.40.50.1980">
    <property type="entry name" value="Nitrogenase molybdenum iron protein domain"/>
    <property type="match status" value="1"/>
</dbReference>
<dbReference type="InterPro" id="IPR050152">
    <property type="entry name" value="ChlB/BchB/BchZ"/>
</dbReference>
<dbReference type="InterPro" id="IPR000510">
    <property type="entry name" value="Nase/OxRdtase_comp1"/>
</dbReference>
<dbReference type="PANTHER" id="PTHR33712">
    <property type="entry name" value="LIGHT-INDEPENDENT PROTOCHLOROPHYLLIDE REDUCTASE SUBUNIT B"/>
    <property type="match status" value="1"/>
</dbReference>
<dbReference type="PANTHER" id="PTHR33712:SF7">
    <property type="entry name" value="LIGHT-INDEPENDENT PROTOCHLOROPHYLLIDE REDUCTASE SUBUNIT B"/>
    <property type="match status" value="1"/>
</dbReference>
<dbReference type="Pfam" id="PF00148">
    <property type="entry name" value="Oxidored_nitro"/>
    <property type="match status" value="1"/>
</dbReference>
<dbReference type="SUPFAM" id="SSF53807">
    <property type="entry name" value="Helical backbone' metal receptor"/>
    <property type="match status" value="1"/>
</dbReference>
<sequence>KRSLRDLGIPVNQIIPEGGSLKDLKDLPRAWFNIVPYREVGLMTATFLEKEYGMPYVSVTPMGILDTAEFISQVEKLVNAWASVLSEERVNYMLYIQNQTRFV</sequence>
<comment type="function">
    <text evidence="1">Component of the dark-operative protochlorophyllide reductase (DPOR) that uses Mg-ATP and reduced ferredoxin to reduce ring D of protochlorophyllide (Pchlide) to form chlorophyllide a (Chlide). This reaction is light-independent. The NB-protein (ChlN-ChlB) is the catalytic component of the complex (By similarity).</text>
</comment>
<comment type="catalytic activity">
    <reaction>
        <text>chlorophyllide a + oxidized 2[4Fe-4S]-[ferredoxin] + 2 ADP + 2 phosphate = protochlorophyllide a + reduced 2[4Fe-4S]-[ferredoxin] + 2 ATP + 2 H2O</text>
        <dbReference type="Rhea" id="RHEA:28202"/>
        <dbReference type="Rhea" id="RHEA-COMP:10002"/>
        <dbReference type="Rhea" id="RHEA-COMP:10004"/>
        <dbReference type="ChEBI" id="CHEBI:15377"/>
        <dbReference type="ChEBI" id="CHEBI:30616"/>
        <dbReference type="ChEBI" id="CHEBI:33722"/>
        <dbReference type="ChEBI" id="CHEBI:33723"/>
        <dbReference type="ChEBI" id="CHEBI:43474"/>
        <dbReference type="ChEBI" id="CHEBI:83348"/>
        <dbReference type="ChEBI" id="CHEBI:83350"/>
        <dbReference type="ChEBI" id="CHEBI:456216"/>
        <dbReference type="EC" id="1.3.7.7"/>
    </reaction>
</comment>
<comment type="cofactor">
    <cofactor evidence="1">
        <name>[4Fe-4S] cluster</name>
        <dbReference type="ChEBI" id="CHEBI:49883"/>
    </cofactor>
    <text evidence="1">Binds 1 [4Fe-4S] cluster per heterodimer. The cluster is bound at the heterodimer interface by residues from both subunits.</text>
</comment>
<comment type="pathway">
    <text>Porphyrin-containing compound metabolism; chlorophyll biosynthesis (light-independent).</text>
</comment>
<comment type="subunit">
    <text evidence="1">Protochlorophyllide reductase is composed of three subunits; ChlL, ChlN and ChlB. Forms a heterotetramer of two ChlB and two ChlN subunits (By similarity).</text>
</comment>
<comment type="subcellular location">
    <subcellularLocation>
        <location>Plastid</location>
        <location>Chloroplast</location>
    </subcellularLocation>
</comment>
<comment type="similarity">
    <text evidence="2">Belongs to the ChlB/BchB/BchZ family.</text>
</comment>
<protein>
    <recommendedName>
        <fullName>Light-independent protochlorophyllide reductase subunit B</fullName>
        <shortName>DPOR subunit B</shortName>
        <shortName>LI-POR subunit B</shortName>
        <ecNumber>1.3.7.7</ecNumber>
    </recommendedName>
</protein>
<gene>
    <name type="primary">chlB</name>
</gene>
<geneLocation type="chloroplast"/>
<organism>
    <name type="scientific">Sphaeropteris cooperi</name>
    <name type="common">Australian tree fern</name>
    <name type="synonym">Cyathea cooperi</name>
    <dbReference type="NCBI Taxonomy" id="49500"/>
    <lineage>
        <taxon>Eukaryota</taxon>
        <taxon>Viridiplantae</taxon>
        <taxon>Streptophyta</taxon>
        <taxon>Embryophyta</taxon>
        <taxon>Tracheophyta</taxon>
        <taxon>Polypodiopsida</taxon>
        <taxon>Polypodiidae</taxon>
        <taxon>Cyatheales</taxon>
        <taxon>Cyatheaceae</taxon>
        <taxon>Sphaeropteris</taxon>
    </lineage>
</organism>
<proteinExistence type="inferred from homology"/>